<reference key="1">
    <citation type="journal article" date="1997" name="Science">
        <title>The complete genome sequence of Escherichia coli K-12.</title>
        <authorList>
            <person name="Blattner F.R."/>
            <person name="Plunkett G. III"/>
            <person name="Bloch C.A."/>
            <person name="Perna N.T."/>
            <person name="Burland V."/>
            <person name="Riley M."/>
            <person name="Collado-Vides J."/>
            <person name="Glasner J.D."/>
            <person name="Rode C.K."/>
            <person name="Mayhew G.F."/>
            <person name="Gregor J."/>
            <person name="Davis N.W."/>
            <person name="Kirkpatrick H.A."/>
            <person name="Goeden M.A."/>
            <person name="Rose D.J."/>
            <person name="Mau B."/>
            <person name="Shao Y."/>
        </authorList>
    </citation>
    <scope>NUCLEOTIDE SEQUENCE [LARGE SCALE GENOMIC DNA]</scope>
    <source>
        <strain>K12 / MG1655 / ATCC 47076</strain>
    </source>
</reference>
<reference key="2">
    <citation type="journal article" date="2006" name="Mol. Syst. Biol.">
        <title>Highly accurate genome sequences of Escherichia coli K-12 strains MG1655 and W3110.</title>
        <authorList>
            <person name="Hayashi K."/>
            <person name="Morooka N."/>
            <person name="Yamamoto Y."/>
            <person name="Fujita K."/>
            <person name="Isono K."/>
            <person name="Choi S."/>
            <person name="Ohtsubo E."/>
            <person name="Baba T."/>
            <person name="Wanner B.L."/>
            <person name="Mori H."/>
            <person name="Horiuchi T."/>
        </authorList>
    </citation>
    <scope>NUCLEOTIDE SEQUENCE [LARGE SCALE GENOMIC DNA]</scope>
    <source>
        <strain>K12 / W3110 / ATCC 27325 / DSM 5911</strain>
    </source>
</reference>
<reference key="3">
    <citation type="submission" date="2009-02" db="PDB data bank">
        <title>Crystal structure of a putative enzyme (possible nudix hydrolase) from Escherichia coli K12.</title>
        <authorList>
            <consortium name="Midwest center for structural genomics (MCSG)"/>
        </authorList>
    </citation>
    <scope>X-RAY CRYSTALLOGRAPHY (2.0 ANGSTROMS) IN COMPLEX WITH MAGNESIUM IONS</scope>
</reference>
<proteinExistence type="evidence at protein level"/>
<accession>P65556</accession>
<accession>P76494</accession>
<accession>Q2MAM0</accession>
<protein>
    <recommendedName>
        <fullName>Uncharacterized Nudix hydrolase YfcD</fullName>
        <ecNumber>3.6.-.-</ecNumber>
    </recommendedName>
</protein>
<evidence type="ECO:0000250" key="1"/>
<evidence type="ECO:0000255" key="2">
    <source>
        <dbReference type="PROSITE-ProRule" id="PRU00794"/>
    </source>
</evidence>
<evidence type="ECO:0000269" key="3">
    <source ref="3"/>
</evidence>
<evidence type="ECO:0000305" key="4"/>
<evidence type="ECO:0007744" key="5">
    <source>
        <dbReference type="PDB" id="2FKB"/>
    </source>
</evidence>
<evidence type="ECO:0007829" key="6">
    <source>
        <dbReference type="PDB" id="2FKB"/>
    </source>
</evidence>
<name>YFCD_ECOLI</name>
<organism>
    <name type="scientific">Escherichia coli (strain K12)</name>
    <dbReference type="NCBI Taxonomy" id="83333"/>
    <lineage>
        <taxon>Bacteria</taxon>
        <taxon>Pseudomonadati</taxon>
        <taxon>Pseudomonadota</taxon>
        <taxon>Gammaproteobacteria</taxon>
        <taxon>Enterobacterales</taxon>
        <taxon>Enterobacteriaceae</taxon>
        <taxon>Escherichia</taxon>
    </lineage>
</organism>
<keyword id="KW-0002">3D-structure</keyword>
<keyword id="KW-0378">Hydrolase</keyword>
<keyword id="KW-0460">Magnesium</keyword>
<keyword id="KW-0479">Metal-binding</keyword>
<keyword id="KW-1185">Reference proteome</keyword>
<feature type="chain" id="PRO_0000057077" description="Uncharacterized Nudix hydrolase YfcD">
    <location>
        <begin position="1"/>
        <end position="180"/>
    </location>
</feature>
<feature type="domain" description="Nudix hydrolase" evidence="2">
    <location>
        <begin position="35"/>
        <end position="163"/>
    </location>
</feature>
<feature type="short sequence motif" description="Nudix box">
    <location>
        <begin position="72"/>
        <end position="94"/>
    </location>
</feature>
<feature type="binding site" evidence="3 5">
    <location>
        <position position="88"/>
    </location>
    <ligand>
        <name>Mg(2+)</name>
        <dbReference type="ChEBI" id="CHEBI:18420"/>
    </ligand>
</feature>
<feature type="binding site" evidence="3 5">
    <location>
        <position position="92"/>
    </location>
    <ligand>
        <name>Mg(2+)</name>
        <dbReference type="ChEBI" id="CHEBI:18420"/>
    </ligand>
</feature>
<feature type="helix" evidence="6">
    <location>
        <begin position="4"/>
        <end position="6"/>
    </location>
</feature>
<feature type="strand" evidence="6">
    <location>
        <begin position="11"/>
        <end position="15"/>
    </location>
</feature>
<feature type="strand" evidence="6">
    <location>
        <begin position="21"/>
        <end position="26"/>
    </location>
</feature>
<feature type="helix" evidence="6">
    <location>
        <begin position="27"/>
        <end position="33"/>
    </location>
</feature>
<feature type="strand" evidence="6">
    <location>
        <begin position="37"/>
        <end position="45"/>
    </location>
</feature>
<feature type="strand" evidence="6">
    <location>
        <begin position="47"/>
        <end position="49"/>
    </location>
</feature>
<feature type="strand" evidence="6">
    <location>
        <begin position="51"/>
        <end position="56"/>
    </location>
</feature>
<feature type="strand" evidence="6">
    <location>
        <begin position="61"/>
        <end position="63"/>
    </location>
</feature>
<feature type="strand" evidence="6">
    <location>
        <begin position="67"/>
        <end position="71"/>
    </location>
</feature>
<feature type="helix" evidence="6">
    <location>
        <begin position="81"/>
        <end position="93"/>
    </location>
</feature>
<feature type="strand" evidence="6">
    <location>
        <begin position="101"/>
        <end position="110"/>
    </location>
</feature>
<feature type="strand" evidence="6">
    <location>
        <begin position="113"/>
        <end position="123"/>
    </location>
</feature>
<feature type="turn" evidence="6">
    <location>
        <begin position="132"/>
        <end position="134"/>
    </location>
</feature>
<feature type="strand" evidence="6">
    <location>
        <begin position="135"/>
        <end position="141"/>
    </location>
</feature>
<feature type="helix" evidence="6">
    <location>
        <begin position="143"/>
        <end position="147"/>
    </location>
</feature>
<feature type="helix" evidence="6">
    <location>
        <begin position="148"/>
        <end position="152"/>
    </location>
</feature>
<feature type="helix" evidence="6">
    <location>
        <begin position="155"/>
        <end position="167"/>
    </location>
</feature>
<dbReference type="EC" id="3.6.-.-"/>
<dbReference type="EMBL" id="U00096">
    <property type="protein sequence ID" value="AAC75359.1"/>
    <property type="molecule type" value="Genomic_DNA"/>
</dbReference>
<dbReference type="EMBL" id="AP009048">
    <property type="protein sequence ID" value="BAE76686.1"/>
    <property type="molecule type" value="Genomic_DNA"/>
</dbReference>
<dbReference type="PIR" id="A65002">
    <property type="entry name" value="A65002"/>
</dbReference>
<dbReference type="RefSeq" id="NP_416802.1">
    <property type="nucleotide sequence ID" value="NC_000913.3"/>
</dbReference>
<dbReference type="RefSeq" id="WP_000437935.1">
    <property type="nucleotide sequence ID" value="NZ_STEB01000008.1"/>
</dbReference>
<dbReference type="PDB" id="2FKB">
    <property type="method" value="X-ray"/>
    <property type="resolution" value="2.00 A"/>
    <property type="chains" value="A/B/C=1-180"/>
</dbReference>
<dbReference type="PDBsum" id="2FKB"/>
<dbReference type="SMR" id="P65556"/>
<dbReference type="BioGRID" id="4260514">
    <property type="interactions" value="18"/>
</dbReference>
<dbReference type="BioGRID" id="851124">
    <property type="interactions" value="1"/>
</dbReference>
<dbReference type="DIP" id="DIP-28086N"/>
<dbReference type="FunCoup" id="P65556">
    <property type="interactions" value="22"/>
</dbReference>
<dbReference type="IntAct" id="P65556">
    <property type="interactions" value="5"/>
</dbReference>
<dbReference type="STRING" id="511145.b2299"/>
<dbReference type="jPOST" id="P65556"/>
<dbReference type="PaxDb" id="511145-b2299"/>
<dbReference type="EnsemblBacteria" id="AAC75359">
    <property type="protein sequence ID" value="AAC75359"/>
    <property type="gene ID" value="b2299"/>
</dbReference>
<dbReference type="GeneID" id="93774875"/>
<dbReference type="GeneID" id="946783"/>
<dbReference type="KEGG" id="ecj:JW2296"/>
<dbReference type="KEGG" id="eco:b2299"/>
<dbReference type="KEGG" id="ecoc:C3026_12825"/>
<dbReference type="PATRIC" id="fig|511145.12.peg.2394"/>
<dbReference type="EchoBASE" id="EB3860"/>
<dbReference type="eggNOG" id="COG1443">
    <property type="taxonomic scope" value="Bacteria"/>
</dbReference>
<dbReference type="HOGENOM" id="CLU_060552_3_0_6"/>
<dbReference type="InParanoid" id="P65556"/>
<dbReference type="OMA" id="KDFYPGW"/>
<dbReference type="OrthoDB" id="517136at2"/>
<dbReference type="PhylomeDB" id="P65556"/>
<dbReference type="BioCyc" id="EcoCyc:G7191-MONOMER"/>
<dbReference type="EvolutionaryTrace" id="P65556"/>
<dbReference type="PRO" id="PR:P65556"/>
<dbReference type="Proteomes" id="UP000000625">
    <property type="component" value="Chromosome"/>
</dbReference>
<dbReference type="GO" id="GO:0005737">
    <property type="term" value="C:cytoplasm"/>
    <property type="evidence" value="ECO:0000318"/>
    <property type="project" value="GO_Central"/>
</dbReference>
<dbReference type="GO" id="GO:0005829">
    <property type="term" value="C:cytosol"/>
    <property type="evidence" value="ECO:0000314"/>
    <property type="project" value="EcoCyc"/>
</dbReference>
<dbReference type="GO" id="GO:0016818">
    <property type="term" value="F:hydrolase activity, acting on acid anhydrides, in phosphorus-containing anhydrides"/>
    <property type="evidence" value="ECO:0000314"/>
    <property type="project" value="EcoCyc"/>
</dbReference>
<dbReference type="GO" id="GO:0046872">
    <property type="term" value="F:metal ion binding"/>
    <property type="evidence" value="ECO:0007669"/>
    <property type="project" value="UniProtKB-KW"/>
</dbReference>
<dbReference type="CDD" id="cd04697">
    <property type="entry name" value="NUDIX_Hydrolase"/>
    <property type="match status" value="1"/>
</dbReference>
<dbReference type="FunFam" id="3.90.79.10:FF:000007">
    <property type="entry name" value="NUDIX hydrolase YfcD"/>
    <property type="match status" value="1"/>
</dbReference>
<dbReference type="Gene3D" id="3.90.79.10">
    <property type="entry name" value="Nucleoside Triphosphate Pyrophosphohydrolase"/>
    <property type="match status" value="1"/>
</dbReference>
<dbReference type="InterPro" id="IPR015797">
    <property type="entry name" value="NUDIX_hydrolase-like_dom_sf"/>
</dbReference>
<dbReference type="InterPro" id="IPR000086">
    <property type="entry name" value="NUDIX_hydrolase_dom"/>
</dbReference>
<dbReference type="InterPro" id="IPR024195">
    <property type="entry name" value="NUDIX_hydrolase_YfcD_pred"/>
</dbReference>
<dbReference type="NCBIfam" id="NF011922">
    <property type="entry name" value="PRK15393.1"/>
    <property type="match status" value="1"/>
</dbReference>
<dbReference type="PANTHER" id="PTHR10885">
    <property type="entry name" value="ISOPENTENYL-DIPHOSPHATE DELTA-ISOMERASE"/>
    <property type="match status" value="1"/>
</dbReference>
<dbReference type="PANTHER" id="PTHR10885:SF0">
    <property type="entry name" value="ISOPENTENYL-DIPHOSPHATE DELTA-ISOMERASE"/>
    <property type="match status" value="1"/>
</dbReference>
<dbReference type="Pfam" id="PF00293">
    <property type="entry name" value="NUDIX"/>
    <property type="match status" value="1"/>
</dbReference>
<dbReference type="PIRSF" id="PIRSF017340">
    <property type="entry name" value="Nudix_hydro"/>
    <property type="match status" value="1"/>
</dbReference>
<dbReference type="SUPFAM" id="SSF55811">
    <property type="entry name" value="Nudix"/>
    <property type="match status" value="1"/>
</dbReference>
<dbReference type="PROSITE" id="PS51462">
    <property type="entry name" value="NUDIX"/>
    <property type="match status" value="1"/>
</dbReference>
<gene>
    <name type="primary">yfcD</name>
    <name type="ordered locus">b2299</name>
    <name type="ordered locus">JW2296</name>
</gene>
<comment type="cofactor">
    <cofactor evidence="1">
        <name>Mg(2+)</name>
        <dbReference type="ChEBI" id="CHEBI:18420"/>
    </cofactor>
</comment>
<comment type="interaction">
    <interactant intactId="EBI-545346">
        <id>P65556</id>
    </interactant>
    <interactant intactId="EBI-545354">
        <id>P31663</id>
        <label>panC</label>
    </interactant>
    <organismsDiffer>false</organismsDiffer>
    <experiments>6</experiments>
</comment>
<comment type="similarity">
    <text evidence="4">Belongs to the Nudix hydrolase family.</text>
</comment>
<sequence>MEQRRLASTEWVDIVNEENEVIAQASREQMRAQCLRHRATYIVVHDGMGKILVQRRTETKDFLPGMLDATAGGVVQADEQLLESARREAEEELGIAGVPFAEHGQFYFEDKNCRVWGALFSCVSHGPFALQEDEVSEVCWLTPEEITARCDEFTPDSLKALALWMKRNAKNEAVETETAE</sequence>